<gene>
    <name evidence="1" type="primary">cysC</name>
    <name type="ordered locus">ECDH10B_2918</name>
</gene>
<keyword id="KW-0067">ATP-binding</keyword>
<keyword id="KW-0418">Kinase</keyword>
<keyword id="KW-0547">Nucleotide-binding</keyword>
<keyword id="KW-0597">Phosphoprotein</keyword>
<keyword id="KW-0808">Transferase</keyword>
<reference key="1">
    <citation type="journal article" date="2008" name="J. Bacteriol.">
        <title>The complete genome sequence of Escherichia coli DH10B: insights into the biology of a laboratory workhorse.</title>
        <authorList>
            <person name="Durfee T."/>
            <person name="Nelson R."/>
            <person name="Baldwin S."/>
            <person name="Plunkett G. III"/>
            <person name="Burland V."/>
            <person name="Mau B."/>
            <person name="Petrosino J.F."/>
            <person name="Qin X."/>
            <person name="Muzny D.M."/>
            <person name="Ayele M."/>
            <person name="Gibbs R.A."/>
            <person name="Csorgo B."/>
            <person name="Posfai G."/>
            <person name="Weinstock G.M."/>
            <person name="Blattner F.R."/>
        </authorList>
    </citation>
    <scope>NUCLEOTIDE SEQUENCE [LARGE SCALE GENOMIC DNA]</scope>
    <source>
        <strain>K12 / DH10B</strain>
    </source>
</reference>
<sequence>MALHDENVVWHSHPVTVQQRELHHGHRGVVLWFTGLSGSGKSTVAGALEEALHKLGVSTYLLDGDNVRHGLCSDLGFSDADRKENIRRVGEVANLMVEAGLVVLTAFISPHRAERQMVRERVGEGRFIEVFVDTPLAICEARDPKGLYKKARAGELRNFTGIDSVYEAPESAEIHLNGEQLVTNLVQQLLDLLRQNDIIRS</sequence>
<comment type="function">
    <text evidence="1">Catalyzes the synthesis of activated sulfate.</text>
</comment>
<comment type="catalytic activity">
    <reaction evidence="1">
        <text>adenosine 5'-phosphosulfate + ATP = 3'-phosphoadenylyl sulfate + ADP + H(+)</text>
        <dbReference type="Rhea" id="RHEA:24152"/>
        <dbReference type="ChEBI" id="CHEBI:15378"/>
        <dbReference type="ChEBI" id="CHEBI:30616"/>
        <dbReference type="ChEBI" id="CHEBI:58243"/>
        <dbReference type="ChEBI" id="CHEBI:58339"/>
        <dbReference type="ChEBI" id="CHEBI:456216"/>
        <dbReference type="EC" id="2.7.1.25"/>
    </reaction>
</comment>
<comment type="pathway">
    <text evidence="1">Sulfur metabolism; hydrogen sulfide biosynthesis; sulfite from sulfate: step 2/3.</text>
</comment>
<comment type="similarity">
    <text evidence="1">Belongs to the APS kinase family.</text>
</comment>
<feature type="chain" id="PRO_1000092240" description="Adenylyl-sulfate kinase">
    <location>
        <begin position="1"/>
        <end position="201"/>
    </location>
</feature>
<feature type="active site" description="Phosphoserine intermediate" evidence="1">
    <location>
        <position position="109"/>
    </location>
</feature>
<feature type="binding site" evidence="1">
    <location>
        <begin position="35"/>
        <end position="42"/>
    </location>
    <ligand>
        <name>ATP</name>
        <dbReference type="ChEBI" id="CHEBI:30616"/>
    </ligand>
</feature>
<protein>
    <recommendedName>
        <fullName evidence="1">Adenylyl-sulfate kinase</fullName>
        <ecNumber evidence="1">2.7.1.25</ecNumber>
    </recommendedName>
    <alternativeName>
        <fullName evidence="1">APS kinase</fullName>
    </alternativeName>
    <alternativeName>
        <fullName evidence="1">ATP adenosine-5'-phosphosulfate 3'-phosphotransferase</fullName>
    </alternativeName>
    <alternativeName>
        <fullName evidence="1">Adenosine-5'-phosphosulfate kinase</fullName>
    </alternativeName>
</protein>
<accession>B1XCS6</accession>
<dbReference type="EC" id="2.7.1.25" evidence="1"/>
<dbReference type="EMBL" id="CP000948">
    <property type="protein sequence ID" value="ACB03867.1"/>
    <property type="molecule type" value="Genomic_DNA"/>
</dbReference>
<dbReference type="RefSeq" id="WP_001173673.1">
    <property type="nucleotide sequence ID" value="NC_010473.1"/>
</dbReference>
<dbReference type="SMR" id="B1XCS6"/>
<dbReference type="GeneID" id="93779256"/>
<dbReference type="KEGG" id="ecd:ECDH10B_2918"/>
<dbReference type="HOGENOM" id="CLU_046932_1_0_6"/>
<dbReference type="UniPathway" id="UPA00140">
    <property type="reaction ID" value="UER00205"/>
</dbReference>
<dbReference type="GO" id="GO:0004020">
    <property type="term" value="F:adenylylsulfate kinase activity"/>
    <property type="evidence" value="ECO:0007669"/>
    <property type="project" value="UniProtKB-UniRule"/>
</dbReference>
<dbReference type="GO" id="GO:0005524">
    <property type="term" value="F:ATP binding"/>
    <property type="evidence" value="ECO:0007669"/>
    <property type="project" value="UniProtKB-UniRule"/>
</dbReference>
<dbReference type="GO" id="GO:0070814">
    <property type="term" value="P:hydrogen sulfide biosynthetic process"/>
    <property type="evidence" value="ECO:0007669"/>
    <property type="project" value="UniProtKB-UniRule"/>
</dbReference>
<dbReference type="GO" id="GO:0000103">
    <property type="term" value="P:sulfate assimilation"/>
    <property type="evidence" value="ECO:0007669"/>
    <property type="project" value="UniProtKB-UniRule"/>
</dbReference>
<dbReference type="CDD" id="cd02027">
    <property type="entry name" value="APSK"/>
    <property type="match status" value="1"/>
</dbReference>
<dbReference type="FunFam" id="3.40.50.300:FF:000212">
    <property type="entry name" value="Adenylyl-sulfate kinase"/>
    <property type="match status" value="1"/>
</dbReference>
<dbReference type="Gene3D" id="3.40.50.300">
    <property type="entry name" value="P-loop containing nucleotide triphosphate hydrolases"/>
    <property type="match status" value="1"/>
</dbReference>
<dbReference type="HAMAP" id="MF_00065">
    <property type="entry name" value="Adenylyl_sulf_kinase"/>
    <property type="match status" value="1"/>
</dbReference>
<dbReference type="InterPro" id="IPR002891">
    <property type="entry name" value="APS_kinase"/>
</dbReference>
<dbReference type="InterPro" id="IPR027417">
    <property type="entry name" value="P-loop_NTPase"/>
</dbReference>
<dbReference type="NCBIfam" id="TIGR00455">
    <property type="entry name" value="apsK"/>
    <property type="match status" value="1"/>
</dbReference>
<dbReference type="NCBIfam" id="NF003013">
    <property type="entry name" value="PRK03846.1"/>
    <property type="match status" value="1"/>
</dbReference>
<dbReference type="PANTHER" id="PTHR11055:SF63">
    <property type="entry name" value="ADENYLYL-SULFATE KINASE 1, CHLOROPLASTIC"/>
    <property type="match status" value="1"/>
</dbReference>
<dbReference type="PANTHER" id="PTHR11055">
    <property type="entry name" value="BIFUNCTIONAL 3'-PHOSPHOADENOSINE 5'-PHOSPHOSULFATE SYNTHASE"/>
    <property type="match status" value="1"/>
</dbReference>
<dbReference type="Pfam" id="PF01583">
    <property type="entry name" value="APS_kinase"/>
    <property type="match status" value="1"/>
</dbReference>
<dbReference type="SUPFAM" id="SSF52540">
    <property type="entry name" value="P-loop containing nucleoside triphosphate hydrolases"/>
    <property type="match status" value="1"/>
</dbReference>
<name>CYSC_ECODH</name>
<organism>
    <name type="scientific">Escherichia coli (strain K12 / DH10B)</name>
    <dbReference type="NCBI Taxonomy" id="316385"/>
    <lineage>
        <taxon>Bacteria</taxon>
        <taxon>Pseudomonadati</taxon>
        <taxon>Pseudomonadota</taxon>
        <taxon>Gammaproteobacteria</taxon>
        <taxon>Enterobacterales</taxon>
        <taxon>Enterobacteriaceae</taxon>
        <taxon>Escherichia</taxon>
    </lineage>
</organism>
<proteinExistence type="inferred from homology"/>
<evidence type="ECO:0000255" key="1">
    <source>
        <dbReference type="HAMAP-Rule" id="MF_00065"/>
    </source>
</evidence>